<proteinExistence type="inferred from homology"/>
<reference key="1">
    <citation type="submission" date="2006-01" db="EMBL/GenBank/DDBJ databases">
        <title>Complete sequence of Novosphingobium aromaticivorans DSM 12444.</title>
        <authorList>
            <consortium name="US DOE Joint Genome Institute"/>
            <person name="Copeland A."/>
            <person name="Lucas S."/>
            <person name="Lapidus A."/>
            <person name="Barry K."/>
            <person name="Detter J.C."/>
            <person name="Glavina T."/>
            <person name="Hammon N."/>
            <person name="Israni S."/>
            <person name="Pitluck S."/>
            <person name="Chain P."/>
            <person name="Malfatti S."/>
            <person name="Shin M."/>
            <person name="Vergez L."/>
            <person name="Schmutz J."/>
            <person name="Larimer F."/>
            <person name="Land M."/>
            <person name="Kyrpides N."/>
            <person name="Ivanova N."/>
            <person name="Fredrickson J."/>
            <person name="Balkwill D."/>
            <person name="Romine M.F."/>
            <person name="Richardson P."/>
        </authorList>
    </citation>
    <scope>NUCLEOTIDE SEQUENCE [LARGE SCALE GENOMIC DNA]</scope>
    <source>
        <strain>ATCC 700278 / DSM 12444 / CCUG 56034 / CIP 105152 / NBRC 16084 / F199</strain>
    </source>
</reference>
<name>LIPB_NOVAD</name>
<gene>
    <name evidence="1" type="primary">lipB</name>
    <name type="ordered locus">Saro_0094</name>
</gene>
<feature type="chain" id="PRO_0000242739" description="Octanoyltransferase">
    <location>
        <begin position="1"/>
        <end position="222"/>
    </location>
</feature>
<feature type="domain" description="BPL/LPL catalytic" evidence="2">
    <location>
        <begin position="35"/>
        <end position="214"/>
    </location>
</feature>
<feature type="active site" description="Acyl-thioester intermediate" evidence="1">
    <location>
        <position position="176"/>
    </location>
</feature>
<feature type="binding site" evidence="1">
    <location>
        <begin position="73"/>
        <end position="80"/>
    </location>
    <ligand>
        <name>substrate</name>
    </ligand>
</feature>
<feature type="binding site" evidence="1">
    <location>
        <begin position="145"/>
        <end position="147"/>
    </location>
    <ligand>
        <name>substrate</name>
    </ligand>
</feature>
<feature type="binding site" evidence="1">
    <location>
        <begin position="158"/>
        <end position="160"/>
    </location>
    <ligand>
        <name>substrate</name>
    </ligand>
</feature>
<feature type="site" description="Lowers pKa of active site Cys" evidence="1">
    <location>
        <position position="142"/>
    </location>
</feature>
<organism>
    <name type="scientific">Novosphingobium aromaticivorans (strain ATCC 700278 / DSM 12444 / CCUG 56034 / CIP 105152 / NBRC 16084 / F199)</name>
    <dbReference type="NCBI Taxonomy" id="279238"/>
    <lineage>
        <taxon>Bacteria</taxon>
        <taxon>Pseudomonadati</taxon>
        <taxon>Pseudomonadota</taxon>
        <taxon>Alphaproteobacteria</taxon>
        <taxon>Sphingomonadales</taxon>
        <taxon>Sphingomonadaceae</taxon>
        <taxon>Novosphingobium</taxon>
    </lineage>
</organism>
<protein>
    <recommendedName>
        <fullName evidence="1">Octanoyltransferase</fullName>
        <ecNumber evidence="1">2.3.1.181</ecNumber>
    </recommendedName>
    <alternativeName>
        <fullName evidence="1">Lipoate-protein ligase B</fullName>
    </alternativeName>
    <alternativeName>
        <fullName evidence="1">Lipoyl/octanoyl transferase</fullName>
    </alternativeName>
    <alternativeName>
        <fullName evidence="1">Octanoyl-[acyl-carrier-protein]-protein N-octanoyltransferase</fullName>
    </alternativeName>
</protein>
<comment type="function">
    <text evidence="1">Catalyzes the transfer of endogenously produced octanoic acid from octanoyl-acyl-carrier-protein onto the lipoyl domains of lipoate-dependent enzymes. Lipoyl-ACP can also act as a substrate although octanoyl-ACP is likely to be the physiological substrate.</text>
</comment>
<comment type="catalytic activity">
    <reaction evidence="1">
        <text>octanoyl-[ACP] + L-lysyl-[protein] = N(6)-octanoyl-L-lysyl-[protein] + holo-[ACP] + H(+)</text>
        <dbReference type="Rhea" id="RHEA:17665"/>
        <dbReference type="Rhea" id="RHEA-COMP:9636"/>
        <dbReference type="Rhea" id="RHEA-COMP:9685"/>
        <dbReference type="Rhea" id="RHEA-COMP:9752"/>
        <dbReference type="Rhea" id="RHEA-COMP:9928"/>
        <dbReference type="ChEBI" id="CHEBI:15378"/>
        <dbReference type="ChEBI" id="CHEBI:29969"/>
        <dbReference type="ChEBI" id="CHEBI:64479"/>
        <dbReference type="ChEBI" id="CHEBI:78463"/>
        <dbReference type="ChEBI" id="CHEBI:78809"/>
        <dbReference type="EC" id="2.3.1.181"/>
    </reaction>
</comment>
<comment type="pathway">
    <text evidence="1">Protein modification; protein lipoylation via endogenous pathway; protein N(6)-(lipoyl)lysine from octanoyl-[acyl-carrier-protein]: step 1/2.</text>
</comment>
<comment type="subcellular location">
    <subcellularLocation>
        <location evidence="1">Cytoplasm</location>
    </subcellularLocation>
</comment>
<comment type="miscellaneous">
    <text evidence="1">In the reaction, the free carboxyl group of octanoic acid is attached via an amide linkage to the epsilon-amino group of a specific lysine residue of lipoyl domains of lipoate-dependent enzymes.</text>
</comment>
<comment type="similarity">
    <text evidence="1">Belongs to the LipB family.</text>
</comment>
<evidence type="ECO:0000255" key="1">
    <source>
        <dbReference type="HAMAP-Rule" id="MF_00013"/>
    </source>
</evidence>
<evidence type="ECO:0000255" key="2">
    <source>
        <dbReference type="PROSITE-ProRule" id="PRU01067"/>
    </source>
</evidence>
<keyword id="KW-0012">Acyltransferase</keyword>
<keyword id="KW-0963">Cytoplasm</keyword>
<keyword id="KW-1185">Reference proteome</keyword>
<keyword id="KW-0808">Transferase</keyword>
<dbReference type="EC" id="2.3.1.181" evidence="1"/>
<dbReference type="EMBL" id="CP000248">
    <property type="protein sequence ID" value="ABD24543.1"/>
    <property type="molecule type" value="Genomic_DNA"/>
</dbReference>
<dbReference type="RefSeq" id="WP_011443757.1">
    <property type="nucleotide sequence ID" value="NC_007794.1"/>
</dbReference>
<dbReference type="SMR" id="Q2GC80"/>
<dbReference type="STRING" id="279238.Saro_0094"/>
<dbReference type="KEGG" id="nar:Saro_0094"/>
<dbReference type="eggNOG" id="COG0321">
    <property type="taxonomic scope" value="Bacteria"/>
</dbReference>
<dbReference type="HOGENOM" id="CLU_035168_3_0_5"/>
<dbReference type="UniPathway" id="UPA00538">
    <property type="reaction ID" value="UER00592"/>
</dbReference>
<dbReference type="Proteomes" id="UP000009134">
    <property type="component" value="Chromosome"/>
</dbReference>
<dbReference type="GO" id="GO:0005737">
    <property type="term" value="C:cytoplasm"/>
    <property type="evidence" value="ECO:0007669"/>
    <property type="project" value="UniProtKB-SubCell"/>
</dbReference>
<dbReference type="GO" id="GO:0033819">
    <property type="term" value="F:lipoyl(octanoyl) transferase activity"/>
    <property type="evidence" value="ECO:0007669"/>
    <property type="project" value="UniProtKB-EC"/>
</dbReference>
<dbReference type="GO" id="GO:0036211">
    <property type="term" value="P:protein modification process"/>
    <property type="evidence" value="ECO:0007669"/>
    <property type="project" value="InterPro"/>
</dbReference>
<dbReference type="CDD" id="cd16444">
    <property type="entry name" value="LipB"/>
    <property type="match status" value="1"/>
</dbReference>
<dbReference type="Gene3D" id="3.30.930.10">
    <property type="entry name" value="Bira Bifunctional Protein, Domain 2"/>
    <property type="match status" value="1"/>
</dbReference>
<dbReference type="HAMAP" id="MF_00013">
    <property type="entry name" value="LipB"/>
    <property type="match status" value="1"/>
</dbReference>
<dbReference type="InterPro" id="IPR045864">
    <property type="entry name" value="aa-tRNA-synth_II/BPL/LPL"/>
</dbReference>
<dbReference type="InterPro" id="IPR004143">
    <property type="entry name" value="BPL_LPL_catalytic"/>
</dbReference>
<dbReference type="InterPro" id="IPR000544">
    <property type="entry name" value="Octanoyltransferase"/>
</dbReference>
<dbReference type="InterPro" id="IPR020605">
    <property type="entry name" value="Octanoyltransferase_CS"/>
</dbReference>
<dbReference type="NCBIfam" id="TIGR00214">
    <property type="entry name" value="lipB"/>
    <property type="match status" value="1"/>
</dbReference>
<dbReference type="NCBIfam" id="NF010921">
    <property type="entry name" value="PRK14341.1"/>
    <property type="match status" value="1"/>
</dbReference>
<dbReference type="NCBIfam" id="NF010925">
    <property type="entry name" value="PRK14345.1"/>
    <property type="match status" value="1"/>
</dbReference>
<dbReference type="PANTHER" id="PTHR10993:SF7">
    <property type="entry name" value="LIPOYLTRANSFERASE 2, MITOCHONDRIAL-RELATED"/>
    <property type="match status" value="1"/>
</dbReference>
<dbReference type="PANTHER" id="PTHR10993">
    <property type="entry name" value="OCTANOYLTRANSFERASE"/>
    <property type="match status" value="1"/>
</dbReference>
<dbReference type="Pfam" id="PF21948">
    <property type="entry name" value="LplA-B_cat"/>
    <property type="match status" value="1"/>
</dbReference>
<dbReference type="PIRSF" id="PIRSF016262">
    <property type="entry name" value="LPLase"/>
    <property type="match status" value="1"/>
</dbReference>
<dbReference type="SUPFAM" id="SSF55681">
    <property type="entry name" value="Class II aaRS and biotin synthetases"/>
    <property type="match status" value="1"/>
</dbReference>
<dbReference type="PROSITE" id="PS51733">
    <property type="entry name" value="BPL_LPL_CATALYTIC"/>
    <property type="match status" value="1"/>
</dbReference>
<dbReference type="PROSITE" id="PS01313">
    <property type="entry name" value="LIPB"/>
    <property type="match status" value="1"/>
</dbReference>
<accession>Q2GC80</accession>
<sequence length="222" mass="24257">MAASETIEIRRETAQVPYREALDAMASRNAAIAEGTAPELIWLLEHPPVYTAGTSASPDELLDPRFEVVEAGRGGRYTYHGPGQRVGYVLLDLRKRARDVRGFVHALEGWVIETLADFGVESWRAEGRVGIWTRGADGREAKIGAIGVRIRRWVTMHGFSVNLSPDLAHFGGIVPCGIEEFGVTSLAALGREVTPDQWDEALLSHLDGFLARLDTPCPPEAA</sequence>